<evidence type="ECO:0000255" key="1">
    <source>
        <dbReference type="HAMAP-Rule" id="MF_01176"/>
    </source>
</evidence>
<evidence type="ECO:0000256" key="2">
    <source>
        <dbReference type="SAM" id="MobiDB-lite"/>
    </source>
</evidence>
<dbReference type="EMBL" id="CP000800">
    <property type="protein sequence ID" value="ABV20353.1"/>
    <property type="molecule type" value="Genomic_DNA"/>
</dbReference>
<dbReference type="RefSeq" id="WP_001241357.1">
    <property type="nucleotide sequence ID" value="NC_009801.1"/>
</dbReference>
<dbReference type="SMR" id="A7ZPX5"/>
<dbReference type="GeneID" id="86947421"/>
<dbReference type="KEGG" id="ecw:EcE24377A_2816"/>
<dbReference type="HOGENOM" id="CLU_107144_0_0_6"/>
<dbReference type="Proteomes" id="UP000001122">
    <property type="component" value="Chromosome"/>
</dbReference>
<dbReference type="GO" id="GO:0005829">
    <property type="term" value="C:cytosol"/>
    <property type="evidence" value="ECO:0007669"/>
    <property type="project" value="TreeGrafter"/>
</dbReference>
<dbReference type="GO" id="GO:0051537">
    <property type="term" value="F:2 iron, 2 sulfur cluster binding"/>
    <property type="evidence" value="ECO:0007669"/>
    <property type="project" value="UniProtKB-KW"/>
</dbReference>
<dbReference type="GO" id="GO:0003700">
    <property type="term" value="F:DNA-binding transcription factor activity"/>
    <property type="evidence" value="ECO:0007669"/>
    <property type="project" value="UniProtKB-UniRule"/>
</dbReference>
<dbReference type="GO" id="GO:0003690">
    <property type="term" value="F:double-stranded DNA binding"/>
    <property type="evidence" value="ECO:0007669"/>
    <property type="project" value="UniProtKB-UniRule"/>
</dbReference>
<dbReference type="GO" id="GO:0005506">
    <property type="term" value="F:iron ion binding"/>
    <property type="evidence" value="ECO:0007669"/>
    <property type="project" value="UniProtKB-UniRule"/>
</dbReference>
<dbReference type="FunFam" id="1.10.10.10:FF:000026">
    <property type="entry name" value="HTH-type transcriptional regulator IscR"/>
    <property type="match status" value="1"/>
</dbReference>
<dbReference type="Gene3D" id="1.10.10.10">
    <property type="entry name" value="Winged helix-like DNA-binding domain superfamily/Winged helix DNA-binding domain"/>
    <property type="match status" value="1"/>
</dbReference>
<dbReference type="HAMAP" id="MF_01176">
    <property type="entry name" value="HTH_type_IscR"/>
    <property type="match status" value="1"/>
</dbReference>
<dbReference type="InterPro" id="IPR010242">
    <property type="entry name" value="TF_HTH_IscR"/>
</dbReference>
<dbReference type="InterPro" id="IPR030489">
    <property type="entry name" value="TR_Rrf2-type_CS"/>
</dbReference>
<dbReference type="InterPro" id="IPR000944">
    <property type="entry name" value="Tscrpt_reg_Rrf2"/>
</dbReference>
<dbReference type="InterPro" id="IPR036388">
    <property type="entry name" value="WH-like_DNA-bd_sf"/>
</dbReference>
<dbReference type="InterPro" id="IPR036390">
    <property type="entry name" value="WH_DNA-bd_sf"/>
</dbReference>
<dbReference type="NCBIfam" id="TIGR02010">
    <property type="entry name" value="IscR"/>
    <property type="match status" value="1"/>
</dbReference>
<dbReference type="NCBIfam" id="NF008110">
    <property type="entry name" value="PRK10857.1"/>
    <property type="match status" value="1"/>
</dbReference>
<dbReference type="NCBIfam" id="TIGR00738">
    <property type="entry name" value="rrf2_super"/>
    <property type="match status" value="1"/>
</dbReference>
<dbReference type="PANTHER" id="PTHR33221:SF5">
    <property type="entry name" value="HTH-TYPE TRANSCRIPTIONAL REGULATOR ISCR"/>
    <property type="match status" value="1"/>
</dbReference>
<dbReference type="PANTHER" id="PTHR33221">
    <property type="entry name" value="WINGED HELIX-TURN-HELIX TRANSCRIPTIONAL REGULATOR, RRF2 FAMILY"/>
    <property type="match status" value="1"/>
</dbReference>
<dbReference type="Pfam" id="PF02082">
    <property type="entry name" value="Rrf2"/>
    <property type="match status" value="1"/>
</dbReference>
<dbReference type="SUPFAM" id="SSF46785">
    <property type="entry name" value="Winged helix' DNA-binding domain"/>
    <property type="match status" value="1"/>
</dbReference>
<dbReference type="PROSITE" id="PS01332">
    <property type="entry name" value="HTH_RRF2_1"/>
    <property type="match status" value="1"/>
</dbReference>
<dbReference type="PROSITE" id="PS51197">
    <property type="entry name" value="HTH_RRF2_2"/>
    <property type="match status" value="1"/>
</dbReference>
<keyword id="KW-0001">2Fe-2S</keyword>
<keyword id="KW-0010">Activator</keyword>
<keyword id="KW-0238">DNA-binding</keyword>
<keyword id="KW-0408">Iron</keyword>
<keyword id="KW-0411">Iron-sulfur</keyword>
<keyword id="KW-0479">Metal-binding</keyword>
<keyword id="KW-1185">Reference proteome</keyword>
<keyword id="KW-0678">Repressor</keyword>
<keyword id="KW-0804">Transcription</keyword>
<keyword id="KW-0805">Transcription regulation</keyword>
<sequence>MRLTSKGRYAVTAMLDVALNSEAGPVPLADISERQGISLSYLEQLFSRLRKNGLVSSVRGPGGGYLLGKDASSIAVGEVISAVDESVDATRCQGKGGCQGGDKCLTHALWRDLSDRLTGFLNNITLGELVNNQEVLDVSGRQHTHDAPRTRTQDAIDVKLRA</sequence>
<protein>
    <recommendedName>
        <fullName evidence="1">HTH-type transcriptional regulator IscR</fullName>
    </recommendedName>
</protein>
<accession>A7ZPX5</accession>
<name>ISCR_ECO24</name>
<organism>
    <name type="scientific">Escherichia coli O139:H28 (strain E24377A / ETEC)</name>
    <dbReference type="NCBI Taxonomy" id="331111"/>
    <lineage>
        <taxon>Bacteria</taxon>
        <taxon>Pseudomonadati</taxon>
        <taxon>Pseudomonadota</taxon>
        <taxon>Gammaproteobacteria</taxon>
        <taxon>Enterobacterales</taxon>
        <taxon>Enterobacteriaceae</taxon>
        <taxon>Escherichia</taxon>
    </lineage>
</organism>
<feature type="chain" id="PRO_1000085415" description="HTH-type transcriptional regulator IscR">
    <location>
        <begin position="1"/>
        <end position="162"/>
    </location>
</feature>
<feature type="domain" description="HTH rrf2-type" evidence="1">
    <location>
        <begin position="2"/>
        <end position="131"/>
    </location>
</feature>
<feature type="DNA-binding region" description="H-T-H motif" evidence="1">
    <location>
        <begin position="28"/>
        <end position="51"/>
    </location>
</feature>
<feature type="region of interest" description="Disordered" evidence="2">
    <location>
        <begin position="140"/>
        <end position="162"/>
    </location>
</feature>
<feature type="compositionally biased region" description="Basic and acidic residues" evidence="2">
    <location>
        <begin position="143"/>
        <end position="162"/>
    </location>
</feature>
<feature type="binding site" evidence="1">
    <location>
        <position position="92"/>
    </location>
    <ligand>
        <name>[2Fe-2S] cluster</name>
        <dbReference type="ChEBI" id="CHEBI:190135"/>
    </ligand>
</feature>
<feature type="binding site" evidence="1">
    <location>
        <position position="98"/>
    </location>
    <ligand>
        <name>[2Fe-2S] cluster</name>
        <dbReference type="ChEBI" id="CHEBI:190135"/>
    </ligand>
</feature>
<feature type="binding site" evidence="1">
    <location>
        <position position="104"/>
    </location>
    <ligand>
        <name>[2Fe-2S] cluster</name>
        <dbReference type="ChEBI" id="CHEBI:190135"/>
    </ligand>
</feature>
<gene>
    <name evidence="1" type="primary">iscR</name>
    <name type="ordered locus">EcE24377A_2816</name>
</gene>
<proteinExistence type="inferred from homology"/>
<reference key="1">
    <citation type="journal article" date="2008" name="J. Bacteriol.">
        <title>The pangenome structure of Escherichia coli: comparative genomic analysis of E. coli commensal and pathogenic isolates.</title>
        <authorList>
            <person name="Rasko D.A."/>
            <person name="Rosovitz M.J."/>
            <person name="Myers G.S.A."/>
            <person name="Mongodin E.F."/>
            <person name="Fricke W.F."/>
            <person name="Gajer P."/>
            <person name="Crabtree J."/>
            <person name="Sebaihia M."/>
            <person name="Thomson N.R."/>
            <person name="Chaudhuri R."/>
            <person name="Henderson I.R."/>
            <person name="Sperandio V."/>
            <person name="Ravel J."/>
        </authorList>
    </citation>
    <scope>NUCLEOTIDE SEQUENCE [LARGE SCALE GENOMIC DNA]</scope>
    <source>
        <strain>E24377A / ETEC</strain>
    </source>
</reference>
<comment type="function">
    <text evidence="1">Regulates the transcription of several operons and genes involved in the biogenesis of Fe-S clusters and Fe-S-containing proteins.</text>
</comment>
<comment type="cofactor">
    <cofactor evidence="1">
        <name>[2Fe-2S] cluster</name>
        <dbReference type="ChEBI" id="CHEBI:190135"/>
    </cofactor>
    <text evidence="1">Binds 1 [2Fe-2S] cluster.</text>
</comment>